<proteinExistence type="inferred from homology"/>
<sequence length="103" mass="10731">MAAVSLTVSTVKPLGDRIFIKVSASEEKTAGGILLPDSAKEKPQVGEVAQVGPGKLNDDGSRQTPEVSIGDKVLYSKYAGTDIKLGGDEYVLLSEKDILAVVG</sequence>
<reference key="1">
    <citation type="journal article" date="2006" name="Science">
        <title>Genomic islands and the ecology and evolution of Prochlorococcus.</title>
        <authorList>
            <person name="Coleman M.L."/>
            <person name="Sullivan M.B."/>
            <person name="Martiny A.C."/>
            <person name="Steglich C."/>
            <person name="Barry K."/>
            <person name="Delong E.F."/>
            <person name="Chisholm S.W."/>
        </authorList>
    </citation>
    <scope>NUCLEOTIDE SEQUENCE [LARGE SCALE GENOMIC DNA]</scope>
    <source>
        <strain>MIT 9312</strain>
    </source>
</reference>
<organism>
    <name type="scientific">Prochlorococcus marinus (strain MIT 9312)</name>
    <dbReference type="NCBI Taxonomy" id="74546"/>
    <lineage>
        <taxon>Bacteria</taxon>
        <taxon>Bacillati</taxon>
        <taxon>Cyanobacteriota</taxon>
        <taxon>Cyanophyceae</taxon>
        <taxon>Synechococcales</taxon>
        <taxon>Prochlorococcaceae</taxon>
        <taxon>Prochlorococcus</taxon>
    </lineage>
</organism>
<evidence type="ECO:0000255" key="1">
    <source>
        <dbReference type="HAMAP-Rule" id="MF_00580"/>
    </source>
</evidence>
<gene>
    <name evidence="1" type="primary">groES</name>
    <name evidence="1" type="synonym">groS</name>
    <name type="ordered locus">PMT9312_1530</name>
</gene>
<protein>
    <recommendedName>
        <fullName evidence="1">Co-chaperonin GroES</fullName>
    </recommendedName>
    <alternativeName>
        <fullName evidence="1">10 kDa chaperonin</fullName>
    </alternativeName>
    <alternativeName>
        <fullName evidence="1">Chaperonin-10</fullName>
        <shortName evidence="1">Cpn10</shortName>
    </alternativeName>
</protein>
<keyword id="KW-0143">Chaperone</keyword>
<keyword id="KW-0963">Cytoplasm</keyword>
<feature type="chain" id="PRO_1000025328" description="Co-chaperonin GroES">
    <location>
        <begin position="1"/>
        <end position="103"/>
    </location>
</feature>
<name>CH10_PROM9</name>
<dbReference type="EMBL" id="CP000111">
    <property type="protein sequence ID" value="ABB50590.1"/>
    <property type="molecule type" value="Genomic_DNA"/>
</dbReference>
<dbReference type="RefSeq" id="WP_011377073.1">
    <property type="nucleotide sequence ID" value="NC_007577.1"/>
</dbReference>
<dbReference type="SMR" id="Q318V5"/>
<dbReference type="STRING" id="74546.PMT9312_1530"/>
<dbReference type="KEGG" id="pmi:PMT9312_1530"/>
<dbReference type="eggNOG" id="COG0234">
    <property type="taxonomic scope" value="Bacteria"/>
</dbReference>
<dbReference type="HOGENOM" id="CLU_132825_2_1_3"/>
<dbReference type="OrthoDB" id="9806791at2"/>
<dbReference type="Proteomes" id="UP000002715">
    <property type="component" value="Chromosome"/>
</dbReference>
<dbReference type="GO" id="GO:0005737">
    <property type="term" value="C:cytoplasm"/>
    <property type="evidence" value="ECO:0007669"/>
    <property type="project" value="UniProtKB-SubCell"/>
</dbReference>
<dbReference type="GO" id="GO:0005524">
    <property type="term" value="F:ATP binding"/>
    <property type="evidence" value="ECO:0007669"/>
    <property type="project" value="InterPro"/>
</dbReference>
<dbReference type="GO" id="GO:0046872">
    <property type="term" value="F:metal ion binding"/>
    <property type="evidence" value="ECO:0007669"/>
    <property type="project" value="TreeGrafter"/>
</dbReference>
<dbReference type="GO" id="GO:0044183">
    <property type="term" value="F:protein folding chaperone"/>
    <property type="evidence" value="ECO:0007669"/>
    <property type="project" value="InterPro"/>
</dbReference>
<dbReference type="GO" id="GO:0051087">
    <property type="term" value="F:protein-folding chaperone binding"/>
    <property type="evidence" value="ECO:0007669"/>
    <property type="project" value="TreeGrafter"/>
</dbReference>
<dbReference type="GO" id="GO:0051082">
    <property type="term" value="F:unfolded protein binding"/>
    <property type="evidence" value="ECO:0007669"/>
    <property type="project" value="TreeGrafter"/>
</dbReference>
<dbReference type="GO" id="GO:0051085">
    <property type="term" value="P:chaperone cofactor-dependent protein refolding"/>
    <property type="evidence" value="ECO:0007669"/>
    <property type="project" value="TreeGrafter"/>
</dbReference>
<dbReference type="CDD" id="cd00320">
    <property type="entry name" value="cpn10"/>
    <property type="match status" value="1"/>
</dbReference>
<dbReference type="FunFam" id="2.30.33.40:FF:000001">
    <property type="entry name" value="10 kDa chaperonin"/>
    <property type="match status" value="1"/>
</dbReference>
<dbReference type="Gene3D" id="2.30.33.40">
    <property type="entry name" value="GroES chaperonin"/>
    <property type="match status" value="1"/>
</dbReference>
<dbReference type="HAMAP" id="MF_00580">
    <property type="entry name" value="CH10"/>
    <property type="match status" value="1"/>
</dbReference>
<dbReference type="InterPro" id="IPR020818">
    <property type="entry name" value="Chaperonin_GroES"/>
</dbReference>
<dbReference type="InterPro" id="IPR037124">
    <property type="entry name" value="Chaperonin_GroES_sf"/>
</dbReference>
<dbReference type="InterPro" id="IPR018369">
    <property type="entry name" value="Chaprnonin_Cpn10_CS"/>
</dbReference>
<dbReference type="InterPro" id="IPR011032">
    <property type="entry name" value="GroES-like_sf"/>
</dbReference>
<dbReference type="NCBIfam" id="NF001530">
    <property type="entry name" value="PRK00364.1-6"/>
    <property type="match status" value="1"/>
</dbReference>
<dbReference type="NCBIfam" id="NF001531">
    <property type="entry name" value="PRK00364.2-2"/>
    <property type="match status" value="1"/>
</dbReference>
<dbReference type="NCBIfam" id="NF001533">
    <property type="entry name" value="PRK00364.2-4"/>
    <property type="match status" value="1"/>
</dbReference>
<dbReference type="NCBIfam" id="NF001534">
    <property type="entry name" value="PRK00364.2-5"/>
    <property type="match status" value="1"/>
</dbReference>
<dbReference type="PANTHER" id="PTHR10772">
    <property type="entry name" value="10 KDA HEAT SHOCK PROTEIN"/>
    <property type="match status" value="1"/>
</dbReference>
<dbReference type="PANTHER" id="PTHR10772:SF58">
    <property type="entry name" value="CO-CHAPERONIN GROES"/>
    <property type="match status" value="1"/>
</dbReference>
<dbReference type="Pfam" id="PF00166">
    <property type="entry name" value="Cpn10"/>
    <property type="match status" value="1"/>
</dbReference>
<dbReference type="PRINTS" id="PR00297">
    <property type="entry name" value="CHAPERONIN10"/>
</dbReference>
<dbReference type="SMART" id="SM00883">
    <property type="entry name" value="Cpn10"/>
    <property type="match status" value="1"/>
</dbReference>
<dbReference type="SUPFAM" id="SSF50129">
    <property type="entry name" value="GroES-like"/>
    <property type="match status" value="1"/>
</dbReference>
<dbReference type="PROSITE" id="PS00681">
    <property type="entry name" value="CHAPERONINS_CPN10"/>
    <property type="match status" value="1"/>
</dbReference>
<accession>Q318V5</accession>
<comment type="function">
    <text evidence="1">Together with the chaperonin GroEL, plays an essential role in assisting protein folding. The GroEL-GroES system forms a nano-cage that allows encapsulation of the non-native substrate proteins and provides a physical environment optimized to promote and accelerate protein folding. GroES binds to the apical surface of the GroEL ring, thereby capping the opening of the GroEL channel.</text>
</comment>
<comment type="subunit">
    <text evidence="1">Heptamer of 7 subunits arranged in a ring. Interacts with the chaperonin GroEL.</text>
</comment>
<comment type="subcellular location">
    <subcellularLocation>
        <location evidence="1">Cytoplasm</location>
    </subcellularLocation>
</comment>
<comment type="similarity">
    <text evidence="1">Belongs to the GroES chaperonin family.</text>
</comment>